<keyword id="KW-0004">4Fe-4S</keyword>
<keyword id="KW-0046">Antibiotic resistance</keyword>
<keyword id="KW-0963">Cytoplasm</keyword>
<keyword id="KW-1015">Disulfide bond</keyword>
<keyword id="KW-0408">Iron</keyword>
<keyword id="KW-0411">Iron-sulfur</keyword>
<keyword id="KW-0479">Metal-binding</keyword>
<keyword id="KW-0489">Methyltransferase</keyword>
<keyword id="KW-1185">Reference proteome</keyword>
<keyword id="KW-0698">rRNA processing</keyword>
<keyword id="KW-0949">S-adenosyl-L-methionine</keyword>
<keyword id="KW-0808">Transferase</keyword>
<gene>
    <name evidence="1" type="primary">cfr</name>
    <name type="ordered locus">Cphy_2221</name>
</gene>
<proteinExistence type="inferred from homology"/>
<evidence type="ECO:0000255" key="1">
    <source>
        <dbReference type="HAMAP-Rule" id="MF_01873"/>
    </source>
</evidence>
<evidence type="ECO:0000255" key="2">
    <source>
        <dbReference type="PROSITE-ProRule" id="PRU01266"/>
    </source>
</evidence>
<reference key="1">
    <citation type="submission" date="2007-11" db="EMBL/GenBank/DDBJ databases">
        <title>Complete genome sequence of Clostridium phytofermentans ISDg.</title>
        <authorList>
            <person name="Leschine S.B."/>
            <person name="Warnick T.A."/>
            <person name="Blanchard J.L."/>
            <person name="Schnell D.J."/>
            <person name="Petit E.L."/>
            <person name="LaTouf W.G."/>
            <person name="Copeland A."/>
            <person name="Lucas S."/>
            <person name="Lapidus A."/>
            <person name="Barry K."/>
            <person name="Glavina del Rio T."/>
            <person name="Dalin E."/>
            <person name="Tice H."/>
            <person name="Pitluck S."/>
            <person name="Kiss H."/>
            <person name="Brettin T."/>
            <person name="Bruce D."/>
            <person name="Detter J.C."/>
            <person name="Han C."/>
            <person name="Kuske C."/>
            <person name="Schmutz J."/>
            <person name="Larimer F."/>
            <person name="Land M."/>
            <person name="Hauser L."/>
            <person name="Kyrpides N."/>
            <person name="Kim E.A."/>
            <person name="Richardson P."/>
        </authorList>
    </citation>
    <scope>NUCLEOTIDE SEQUENCE [LARGE SCALE GENOMIC DNA]</scope>
    <source>
        <strain>ATCC 700394 / DSM 18823 / ISDg</strain>
    </source>
</reference>
<dbReference type="EC" id="2.1.1.224" evidence="1"/>
<dbReference type="EMBL" id="CP000885">
    <property type="protein sequence ID" value="ABX42587.1"/>
    <property type="molecule type" value="Genomic_DNA"/>
</dbReference>
<dbReference type="RefSeq" id="WP_012200241.1">
    <property type="nucleotide sequence ID" value="NC_010001.1"/>
</dbReference>
<dbReference type="SMR" id="A9KK15"/>
<dbReference type="STRING" id="357809.Cphy_2221"/>
<dbReference type="KEGG" id="cpy:Cphy_2221"/>
<dbReference type="eggNOG" id="COG0820">
    <property type="taxonomic scope" value="Bacteria"/>
</dbReference>
<dbReference type="HOGENOM" id="CLU_029101_0_2_9"/>
<dbReference type="OrthoDB" id="9793973at2"/>
<dbReference type="Proteomes" id="UP000000370">
    <property type="component" value="Chromosome"/>
</dbReference>
<dbReference type="GO" id="GO:0005737">
    <property type="term" value="C:cytoplasm"/>
    <property type="evidence" value="ECO:0007669"/>
    <property type="project" value="UniProtKB-SubCell"/>
</dbReference>
<dbReference type="GO" id="GO:0051539">
    <property type="term" value="F:4 iron, 4 sulfur cluster binding"/>
    <property type="evidence" value="ECO:0007669"/>
    <property type="project" value="UniProtKB-UniRule"/>
</dbReference>
<dbReference type="GO" id="GO:0046872">
    <property type="term" value="F:metal ion binding"/>
    <property type="evidence" value="ECO:0007669"/>
    <property type="project" value="UniProtKB-KW"/>
</dbReference>
<dbReference type="GO" id="GO:0016433">
    <property type="term" value="F:rRNA (adenine) methyltransferase activity"/>
    <property type="evidence" value="ECO:0007669"/>
    <property type="project" value="UniProtKB-UniRule"/>
</dbReference>
<dbReference type="GO" id="GO:0019843">
    <property type="term" value="F:rRNA binding"/>
    <property type="evidence" value="ECO:0007669"/>
    <property type="project" value="UniProtKB-UniRule"/>
</dbReference>
<dbReference type="GO" id="GO:0046677">
    <property type="term" value="P:response to antibiotic"/>
    <property type="evidence" value="ECO:0007669"/>
    <property type="project" value="UniProtKB-KW"/>
</dbReference>
<dbReference type="GO" id="GO:0070475">
    <property type="term" value="P:rRNA base methylation"/>
    <property type="evidence" value="ECO:0007669"/>
    <property type="project" value="UniProtKB-UniRule"/>
</dbReference>
<dbReference type="GO" id="GO:0030488">
    <property type="term" value="P:tRNA methylation"/>
    <property type="evidence" value="ECO:0007669"/>
    <property type="project" value="TreeGrafter"/>
</dbReference>
<dbReference type="CDD" id="cd01335">
    <property type="entry name" value="Radical_SAM"/>
    <property type="match status" value="1"/>
</dbReference>
<dbReference type="FunFam" id="3.20.20.70:FF:000014">
    <property type="entry name" value="Probable dual-specificity RNA methyltransferase RlmN"/>
    <property type="match status" value="1"/>
</dbReference>
<dbReference type="Gene3D" id="1.10.150.530">
    <property type="match status" value="1"/>
</dbReference>
<dbReference type="Gene3D" id="3.20.20.70">
    <property type="entry name" value="Aldolase class I"/>
    <property type="match status" value="1"/>
</dbReference>
<dbReference type="HAMAP" id="MF_01873">
    <property type="entry name" value="23SrRNA_methyltr_Cfr"/>
    <property type="match status" value="1"/>
</dbReference>
<dbReference type="InterPro" id="IPR013785">
    <property type="entry name" value="Aldolase_TIM"/>
</dbReference>
<dbReference type="InterPro" id="IPR040072">
    <property type="entry name" value="Methyltransferase_A"/>
</dbReference>
<dbReference type="InterPro" id="IPR022881">
    <property type="entry name" value="rRNA_lsu_MeTfrase_Cfr"/>
</dbReference>
<dbReference type="InterPro" id="IPR004383">
    <property type="entry name" value="rRNA_lsu_MTrfase_RlmN/Cfr"/>
</dbReference>
<dbReference type="InterPro" id="IPR007197">
    <property type="entry name" value="rSAM"/>
</dbReference>
<dbReference type="NCBIfam" id="NF000424">
    <property type="entry name" value="CfrAB"/>
    <property type="match status" value="1"/>
</dbReference>
<dbReference type="NCBIfam" id="NF011024">
    <property type="entry name" value="PRK14453.1"/>
    <property type="match status" value="1"/>
</dbReference>
<dbReference type="NCBIfam" id="TIGR04432">
    <property type="entry name" value="rSAM_Cfr"/>
    <property type="match status" value="1"/>
</dbReference>
<dbReference type="PANTHER" id="PTHR30544">
    <property type="entry name" value="23S RRNA METHYLTRANSFERASE"/>
    <property type="match status" value="1"/>
</dbReference>
<dbReference type="PANTHER" id="PTHR30544:SF5">
    <property type="entry name" value="RADICAL SAM CORE DOMAIN-CONTAINING PROTEIN"/>
    <property type="match status" value="1"/>
</dbReference>
<dbReference type="Pfam" id="PF04055">
    <property type="entry name" value="Radical_SAM"/>
    <property type="match status" value="1"/>
</dbReference>
<dbReference type="PIRSF" id="PIRSF006004">
    <property type="entry name" value="CHP00048"/>
    <property type="match status" value="1"/>
</dbReference>
<dbReference type="SFLD" id="SFLDF00275">
    <property type="entry name" value="adenosine_C2_methyltransferase"/>
    <property type="match status" value="1"/>
</dbReference>
<dbReference type="SFLD" id="SFLDF00296">
    <property type="entry name" value="adenosine_C8_methyltransferase"/>
    <property type="match status" value="1"/>
</dbReference>
<dbReference type="SFLD" id="SFLDS00029">
    <property type="entry name" value="Radical_SAM"/>
    <property type="match status" value="1"/>
</dbReference>
<dbReference type="SUPFAM" id="SSF102114">
    <property type="entry name" value="Radical SAM enzymes"/>
    <property type="match status" value="1"/>
</dbReference>
<dbReference type="PROSITE" id="PS51918">
    <property type="entry name" value="RADICAL_SAM"/>
    <property type="match status" value="1"/>
</dbReference>
<sequence length="344" mass="38651">MNYSKYETMKQLIADMKLPDYRYEQIIKAIFSQHTSTFEKMSTLPLELKKSLINTFGPSVCCTVPVACQTSGQADKILFSLPDGNRVETVNLHYKKGWESFCISSQCGCGFGCQFCATGTLGHKRNMTADEITDQLLYFHLNGHKLNSISFMGMGEPLANPNLFDALNILNDSSLFGLSQRRITISTIGIIPGIKRLTHEFPQINLAYSLHSPFENQRSELMPVNRSFPLHEVMNALDNHIRHTGRRLFLAYIMLNGVNDSVDHAKALVELLQDRGPWAHLYHVDLIPYNATDKTPRKFASSDKITMKRFRDILHANGISVATRTQFGSDISAACGQLLGEKDV</sequence>
<feature type="chain" id="PRO_0000350129" description="Ribosomal RNA large subunit methyltransferase Cfr">
    <location>
        <begin position="1"/>
        <end position="344"/>
    </location>
</feature>
<feature type="domain" description="Radical SAM core" evidence="2">
    <location>
        <begin position="95"/>
        <end position="324"/>
    </location>
</feature>
<feature type="active site" description="Proton acceptor" evidence="1">
    <location>
        <position position="88"/>
    </location>
</feature>
<feature type="active site" description="S-methylcysteine intermediate" evidence="1">
    <location>
        <position position="335"/>
    </location>
</feature>
<feature type="binding site" evidence="1">
    <location>
        <position position="109"/>
    </location>
    <ligand>
        <name>[4Fe-4S] cluster</name>
        <dbReference type="ChEBI" id="CHEBI:49883"/>
        <note>4Fe-4S-S-AdoMet</note>
    </ligand>
</feature>
<feature type="binding site" evidence="1">
    <location>
        <position position="113"/>
    </location>
    <ligand>
        <name>[4Fe-4S] cluster</name>
        <dbReference type="ChEBI" id="CHEBI:49883"/>
        <note>4Fe-4S-S-AdoMet</note>
    </ligand>
</feature>
<feature type="binding site" evidence="1">
    <location>
        <position position="116"/>
    </location>
    <ligand>
        <name>[4Fe-4S] cluster</name>
        <dbReference type="ChEBI" id="CHEBI:49883"/>
        <note>4Fe-4S-S-AdoMet</note>
    </ligand>
</feature>
<feature type="binding site" evidence="1">
    <location>
        <begin position="155"/>
        <end position="156"/>
    </location>
    <ligand>
        <name>S-adenosyl-L-methionine</name>
        <dbReference type="ChEBI" id="CHEBI:59789"/>
    </ligand>
</feature>
<feature type="binding site" evidence="1">
    <location>
        <position position="186"/>
    </location>
    <ligand>
        <name>S-adenosyl-L-methionine</name>
        <dbReference type="ChEBI" id="CHEBI:59789"/>
    </ligand>
</feature>
<feature type="binding site" evidence="1">
    <location>
        <begin position="209"/>
        <end position="211"/>
    </location>
    <ligand>
        <name>S-adenosyl-L-methionine</name>
        <dbReference type="ChEBI" id="CHEBI:59789"/>
    </ligand>
</feature>
<feature type="binding site" evidence="1">
    <location>
        <position position="290"/>
    </location>
    <ligand>
        <name>S-adenosyl-L-methionine</name>
        <dbReference type="ChEBI" id="CHEBI:59789"/>
    </ligand>
</feature>
<feature type="disulfide bond" description="(transient)" evidence="1">
    <location>
        <begin position="102"/>
        <end position="335"/>
    </location>
</feature>
<comment type="function">
    <text evidence="1">Specifically methylates position 8 of adenine 2503 in 23S rRNA. Confers resistance to some classes of antibiotics.</text>
</comment>
<comment type="catalytic activity">
    <reaction evidence="1">
        <text>adenosine(2503) in 23S rRNA + 2 reduced [2Fe-2S]-[ferredoxin] + 2 S-adenosyl-L-methionine = 8-methyladenosine(2503) in 23S rRNA + 5'-deoxyadenosine + L-methionine + 2 oxidized [2Fe-2S]-[ferredoxin] + S-adenosyl-L-homocysteine</text>
        <dbReference type="Rhea" id="RHEA:42632"/>
        <dbReference type="Rhea" id="RHEA-COMP:10000"/>
        <dbReference type="Rhea" id="RHEA-COMP:10001"/>
        <dbReference type="Rhea" id="RHEA-COMP:10152"/>
        <dbReference type="Rhea" id="RHEA-COMP:10153"/>
        <dbReference type="ChEBI" id="CHEBI:17319"/>
        <dbReference type="ChEBI" id="CHEBI:33737"/>
        <dbReference type="ChEBI" id="CHEBI:33738"/>
        <dbReference type="ChEBI" id="CHEBI:57844"/>
        <dbReference type="ChEBI" id="CHEBI:57856"/>
        <dbReference type="ChEBI" id="CHEBI:59789"/>
        <dbReference type="ChEBI" id="CHEBI:74411"/>
        <dbReference type="ChEBI" id="CHEBI:74543"/>
        <dbReference type="EC" id="2.1.1.224"/>
    </reaction>
</comment>
<comment type="cofactor">
    <cofactor evidence="1">
        <name>[4Fe-4S] cluster</name>
        <dbReference type="ChEBI" id="CHEBI:49883"/>
    </cofactor>
    <text evidence="1">Binds 1 [4Fe-4S] cluster. The cluster is coordinated with 3 cysteines and an exchangeable S-adenosyl-L-methionine.</text>
</comment>
<comment type="subcellular location">
    <subcellularLocation>
        <location evidence="1">Cytoplasm</location>
    </subcellularLocation>
</comment>
<comment type="miscellaneous">
    <text evidence="1">Reaction proceeds by a ping-pong mechanism involving intermediate methylation of a conserved cysteine residue.</text>
</comment>
<comment type="similarity">
    <text evidence="1">Belongs to the radical SAM superfamily. RlmN family. Cfr subfamily.</text>
</comment>
<accession>A9KK15</accession>
<organism>
    <name type="scientific">Lachnoclostridium phytofermentans (strain ATCC 700394 / DSM 18823 / ISDg)</name>
    <name type="common">Clostridium phytofermentans</name>
    <dbReference type="NCBI Taxonomy" id="357809"/>
    <lineage>
        <taxon>Bacteria</taxon>
        <taxon>Bacillati</taxon>
        <taxon>Bacillota</taxon>
        <taxon>Clostridia</taxon>
        <taxon>Lachnospirales</taxon>
        <taxon>Lachnospiraceae</taxon>
    </lineage>
</organism>
<protein>
    <recommendedName>
        <fullName evidence="1">Ribosomal RNA large subunit methyltransferase Cfr</fullName>
        <ecNumber evidence="1">2.1.1.224</ecNumber>
    </recommendedName>
    <alternativeName>
        <fullName evidence="1">23S rRNA (adenine(2503)-C(8))-methyltransferase</fullName>
    </alternativeName>
    <alternativeName>
        <fullName evidence="1">23S rRNA m8A2503 methyltransferase</fullName>
    </alternativeName>
</protein>
<name>CFR_LACP7</name>